<dbReference type="EC" id="5.1.3.1" evidence="1"/>
<dbReference type="EMBL" id="AE001439">
    <property type="protein sequence ID" value="AAD07015.1"/>
    <property type="molecule type" value="Genomic_DNA"/>
</dbReference>
<dbReference type="PIR" id="G71807">
    <property type="entry name" value="G71807"/>
</dbReference>
<dbReference type="RefSeq" id="WP_000861417.1">
    <property type="nucleotide sequence ID" value="NC_000921.1"/>
</dbReference>
<dbReference type="SMR" id="Q9ZJ75"/>
<dbReference type="KEGG" id="hpj:jhp_1439"/>
<dbReference type="PATRIC" id="fig|85963.30.peg.1105"/>
<dbReference type="eggNOG" id="COG0036">
    <property type="taxonomic scope" value="Bacteria"/>
</dbReference>
<dbReference type="Proteomes" id="UP000000804">
    <property type="component" value="Chromosome"/>
</dbReference>
<dbReference type="GO" id="GO:0004750">
    <property type="term" value="F:D-ribulose-phosphate 3-epimerase activity"/>
    <property type="evidence" value="ECO:0007669"/>
    <property type="project" value="UniProtKB-UniRule"/>
</dbReference>
<dbReference type="GO" id="GO:0046872">
    <property type="term" value="F:metal ion binding"/>
    <property type="evidence" value="ECO:0007669"/>
    <property type="project" value="UniProtKB-UniRule"/>
</dbReference>
<dbReference type="GO" id="GO:0019323">
    <property type="term" value="P:pentose catabolic process"/>
    <property type="evidence" value="ECO:0007669"/>
    <property type="project" value="UniProtKB-UniRule"/>
</dbReference>
<dbReference type="GO" id="GO:0006098">
    <property type="term" value="P:pentose-phosphate shunt"/>
    <property type="evidence" value="ECO:0007669"/>
    <property type="project" value="InterPro"/>
</dbReference>
<dbReference type="CDD" id="cd00429">
    <property type="entry name" value="RPE"/>
    <property type="match status" value="1"/>
</dbReference>
<dbReference type="FunFam" id="3.20.20.70:FF:000004">
    <property type="entry name" value="Ribulose-phosphate 3-epimerase"/>
    <property type="match status" value="1"/>
</dbReference>
<dbReference type="Gene3D" id="3.20.20.70">
    <property type="entry name" value="Aldolase class I"/>
    <property type="match status" value="1"/>
</dbReference>
<dbReference type="HAMAP" id="MF_02227">
    <property type="entry name" value="RPE"/>
    <property type="match status" value="1"/>
</dbReference>
<dbReference type="InterPro" id="IPR013785">
    <property type="entry name" value="Aldolase_TIM"/>
</dbReference>
<dbReference type="InterPro" id="IPR026019">
    <property type="entry name" value="Ribul_P_3_epim"/>
</dbReference>
<dbReference type="InterPro" id="IPR000056">
    <property type="entry name" value="Ribul_P_3_epim-like"/>
</dbReference>
<dbReference type="InterPro" id="IPR011060">
    <property type="entry name" value="RibuloseP-bd_barrel"/>
</dbReference>
<dbReference type="NCBIfam" id="NF004076">
    <property type="entry name" value="PRK05581.1-4"/>
    <property type="match status" value="1"/>
</dbReference>
<dbReference type="NCBIfam" id="TIGR01163">
    <property type="entry name" value="rpe"/>
    <property type="match status" value="1"/>
</dbReference>
<dbReference type="PANTHER" id="PTHR11749">
    <property type="entry name" value="RIBULOSE-5-PHOSPHATE-3-EPIMERASE"/>
    <property type="match status" value="1"/>
</dbReference>
<dbReference type="Pfam" id="PF00834">
    <property type="entry name" value="Ribul_P_3_epim"/>
    <property type="match status" value="1"/>
</dbReference>
<dbReference type="PIRSF" id="PIRSF001461">
    <property type="entry name" value="RPE"/>
    <property type="match status" value="1"/>
</dbReference>
<dbReference type="SUPFAM" id="SSF51366">
    <property type="entry name" value="Ribulose-phoshate binding barrel"/>
    <property type="match status" value="1"/>
</dbReference>
<dbReference type="PROSITE" id="PS01085">
    <property type="entry name" value="RIBUL_P_3_EPIMER_1"/>
    <property type="match status" value="1"/>
</dbReference>
<dbReference type="PROSITE" id="PS01086">
    <property type="entry name" value="RIBUL_P_3_EPIMER_2"/>
    <property type="match status" value="1"/>
</dbReference>
<evidence type="ECO:0000255" key="1">
    <source>
        <dbReference type="HAMAP-Rule" id="MF_02227"/>
    </source>
</evidence>
<accession>Q9ZJ75</accession>
<reference key="1">
    <citation type="journal article" date="1999" name="Nature">
        <title>Genomic sequence comparison of two unrelated isolates of the human gastric pathogen Helicobacter pylori.</title>
        <authorList>
            <person name="Alm R.A."/>
            <person name="Ling L.-S.L."/>
            <person name="Moir D.T."/>
            <person name="King B.L."/>
            <person name="Brown E.D."/>
            <person name="Doig P.C."/>
            <person name="Smith D.R."/>
            <person name="Noonan B."/>
            <person name="Guild B.C."/>
            <person name="deJonge B.L."/>
            <person name="Carmel G."/>
            <person name="Tummino P.J."/>
            <person name="Caruso A."/>
            <person name="Uria-Nickelsen M."/>
            <person name="Mills D.M."/>
            <person name="Ives C."/>
            <person name="Gibson R."/>
            <person name="Merberg D."/>
            <person name="Mills S.D."/>
            <person name="Jiang Q."/>
            <person name="Taylor D.E."/>
            <person name="Vovis G.F."/>
            <person name="Trust T.J."/>
        </authorList>
    </citation>
    <scope>NUCLEOTIDE SEQUENCE [LARGE SCALE GENOMIC DNA]</scope>
    <source>
        <strain>J99 / ATCC 700824</strain>
    </source>
</reference>
<keyword id="KW-0119">Carbohydrate metabolism</keyword>
<keyword id="KW-0413">Isomerase</keyword>
<keyword id="KW-0479">Metal-binding</keyword>
<comment type="function">
    <text evidence="1">Catalyzes the reversible epimerization of D-ribulose 5-phosphate to D-xylulose 5-phosphate.</text>
</comment>
<comment type="catalytic activity">
    <reaction evidence="1">
        <text>D-ribulose 5-phosphate = D-xylulose 5-phosphate</text>
        <dbReference type="Rhea" id="RHEA:13677"/>
        <dbReference type="ChEBI" id="CHEBI:57737"/>
        <dbReference type="ChEBI" id="CHEBI:58121"/>
        <dbReference type="EC" id="5.1.3.1"/>
    </reaction>
</comment>
<comment type="cofactor">
    <cofactor evidence="1">
        <name>a divalent metal cation</name>
        <dbReference type="ChEBI" id="CHEBI:60240"/>
    </cofactor>
    <text evidence="1">Binds 1 divalent metal cation per subunit.</text>
</comment>
<comment type="pathway">
    <text evidence="1">Carbohydrate degradation.</text>
</comment>
<comment type="similarity">
    <text evidence="1">Belongs to the ribulose-phosphate 3-epimerase family.</text>
</comment>
<proteinExistence type="inferred from homology"/>
<sequence>MKVAPSLLSADFMHLAKEIESVSNADFLHVDVMDGHYVPNLTMGPVILENVTQMSQVPLDVHLMVENASFFVELFAPLNPQIISIHAENEKHPHRVLQLIKSSGITPGIVLNPHTHEESIKYLLESVGLVLLMSVNPGFGGQKFLDLVLEKCLKVKELIKRYNPSCLLEVDGGVNDKNIFELQQAGVDVVVSGSYIFESKDRKLAIEGLQNVRQPLA</sequence>
<organism>
    <name type="scientific">Helicobacter pylori (strain J99 / ATCC 700824)</name>
    <name type="common">Campylobacter pylori J99</name>
    <dbReference type="NCBI Taxonomy" id="85963"/>
    <lineage>
        <taxon>Bacteria</taxon>
        <taxon>Pseudomonadati</taxon>
        <taxon>Campylobacterota</taxon>
        <taxon>Epsilonproteobacteria</taxon>
        <taxon>Campylobacterales</taxon>
        <taxon>Helicobacteraceae</taxon>
        <taxon>Helicobacter</taxon>
    </lineage>
</organism>
<protein>
    <recommendedName>
        <fullName evidence="1">Ribulose-phosphate 3-epimerase</fullName>
        <ecNumber evidence="1">5.1.3.1</ecNumber>
    </recommendedName>
</protein>
<feature type="chain" id="PRO_0000171573" description="Ribulose-phosphate 3-epimerase">
    <location>
        <begin position="1"/>
        <end position="217"/>
    </location>
</feature>
<feature type="active site" description="Proton acceptor" evidence="1">
    <location>
        <position position="31"/>
    </location>
</feature>
<feature type="active site" description="Proton donor" evidence="1">
    <location>
        <position position="171"/>
    </location>
</feature>
<feature type="binding site" evidence="1">
    <location>
        <position position="6"/>
    </location>
    <ligand>
        <name>substrate</name>
    </ligand>
</feature>
<feature type="binding site" evidence="1">
    <location>
        <position position="29"/>
    </location>
    <ligand>
        <name>a divalent metal cation</name>
        <dbReference type="ChEBI" id="CHEBI:60240"/>
    </ligand>
</feature>
<feature type="binding site" evidence="1">
    <location>
        <position position="31"/>
    </location>
    <ligand>
        <name>a divalent metal cation</name>
        <dbReference type="ChEBI" id="CHEBI:60240"/>
    </ligand>
</feature>
<feature type="binding site" evidence="1">
    <location>
        <position position="62"/>
    </location>
    <ligand>
        <name>a divalent metal cation</name>
        <dbReference type="ChEBI" id="CHEBI:60240"/>
    </ligand>
</feature>
<feature type="binding site" evidence="1">
    <location>
        <position position="62"/>
    </location>
    <ligand>
        <name>substrate</name>
    </ligand>
</feature>
<feature type="binding site" evidence="1">
    <location>
        <begin position="138"/>
        <end position="141"/>
    </location>
    <ligand>
        <name>substrate</name>
    </ligand>
</feature>
<feature type="binding site" evidence="1">
    <location>
        <begin position="171"/>
        <end position="173"/>
    </location>
    <ligand>
        <name>substrate</name>
    </ligand>
</feature>
<feature type="binding site" evidence="1">
    <location>
        <position position="171"/>
    </location>
    <ligand>
        <name>a divalent metal cation</name>
        <dbReference type="ChEBI" id="CHEBI:60240"/>
    </ligand>
</feature>
<feature type="binding site" evidence="1">
    <location>
        <begin position="193"/>
        <end position="194"/>
    </location>
    <ligand>
        <name>substrate</name>
    </ligand>
</feature>
<name>RPE_HELPJ</name>
<gene>
    <name evidence="1" type="primary">rpe</name>
    <name type="ordered locus">jhp_1439</name>
</gene>